<feature type="chain" id="PRO_0000427627" description="Uncharacterized protein MT0992">
    <location>
        <begin position="1"/>
        <end position="266"/>
    </location>
</feature>
<name>Y963_MYCTO</name>
<sequence>MLQRELTRLQNGWLSRDGVWHTDTDKLADLRALRDTLAAHPGTSLILLDTASDPRKVLAAVGVGDVDNAERVGVTMGGLNTRVSSSVGDMVKEAGIQRAKAAELRERAGWPNYDAVASIAWLGYDAPDGLKDVMHDWSARDAAGPLNRFDKGLAATTNVSDQHITAFGHSYGSLVTSLALQQGAPVSDVVLYGSPGTELTHASQLGVEPGHAFYMIGVNDHVANTIPEFGAFGSAPQDVPGMTQLSVNTGLAPGPLLGDGQLHERA</sequence>
<keyword id="KW-1185">Reference proteome</keyword>
<proteinExistence type="predicted"/>
<protein>
    <recommendedName>
        <fullName>Uncharacterized protein MT0992</fullName>
    </recommendedName>
</protein>
<accession>P9WKM6</accession>
<accession>L0T885</accession>
<accession>P64777</accession>
<accession>P71547</accession>
<reference key="1">
    <citation type="journal article" date="2002" name="J. Bacteriol.">
        <title>Whole-genome comparison of Mycobacterium tuberculosis clinical and laboratory strains.</title>
        <authorList>
            <person name="Fleischmann R.D."/>
            <person name="Alland D."/>
            <person name="Eisen J.A."/>
            <person name="Carpenter L."/>
            <person name="White O."/>
            <person name="Peterson J.D."/>
            <person name="DeBoy R.T."/>
            <person name="Dodson R.J."/>
            <person name="Gwinn M.L."/>
            <person name="Haft D.H."/>
            <person name="Hickey E.K."/>
            <person name="Kolonay J.F."/>
            <person name="Nelson W.C."/>
            <person name="Umayam L.A."/>
            <person name="Ermolaeva M.D."/>
            <person name="Salzberg S.L."/>
            <person name="Delcher A."/>
            <person name="Utterback T.R."/>
            <person name="Weidman J.F."/>
            <person name="Khouri H.M."/>
            <person name="Gill J."/>
            <person name="Mikula A."/>
            <person name="Bishai W."/>
            <person name="Jacobs W.R. Jr."/>
            <person name="Venter J.C."/>
            <person name="Fraser C.M."/>
        </authorList>
    </citation>
    <scope>NUCLEOTIDE SEQUENCE [LARGE SCALE GENOMIC DNA]</scope>
    <source>
        <strain>CDC 1551 / Oshkosh</strain>
    </source>
</reference>
<dbReference type="EMBL" id="AE000516">
    <property type="protein sequence ID" value="AAK45240.1"/>
    <property type="molecule type" value="Genomic_DNA"/>
</dbReference>
<dbReference type="PIR" id="A70718">
    <property type="entry name" value="A70718"/>
</dbReference>
<dbReference type="ESTHER" id="myctu-y963">
    <property type="family name" value="Duf_1023"/>
</dbReference>
<dbReference type="KEGG" id="mtc:MT0992"/>
<dbReference type="PATRIC" id="fig|83331.31.peg.1064"/>
<dbReference type="HOGENOM" id="CLU_064942_0_0_11"/>
<dbReference type="Proteomes" id="UP000001020">
    <property type="component" value="Chromosome"/>
</dbReference>
<dbReference type="InterPro" id="IPR029058">
    <property type="entry name" value="AB_hydrolase_fold"/>
</dbReference>
<dbReference type="InterPro" id="IPR010427">
    <property type="entry name" value="DUF1023"/>
</dbReference>
<dbReference type="Pfam" id="PF06259">
    <property type="entry name" value="Abhydrolase_8"/>
    <property type="match status" value="1"/>
</dbReference>
<dbReference type="SUPFAM" id="SSF53474">
    <property type="entry name" value="alpha/beta-Hydrolases"/>
    <property type="match status" value="1"/>
</dbReference>
<gene>
    <name type="ordered locus">MT0992</name>
</gene>
<organism>
    <name type="scientific">Mycobacterium tuberculosis (strain CDC 1551 / Oshkosh)</name>
    <dbReference type="NCBI Taxonomy" id="83331"/>
    <lineage>
        <taxon>Bacteria</taxon>
        <taxon>Bacillati</taxon>
        <taxon>Actinomycetota</taxon>
        <taxon>Actinomycetes</taxon>
        <taxon>Mycobacteriales</taxon>
        <taxon>Mycobacteriaceae</taxon>
        <taxon>Mycobacterium</taxon>
        <taxon>Mycobacterium tuberculosis complex</taxon>
    </lineage>
</organism>